<sequence length="247" mass="28569">MRKVFETVVGLNPNFSFRGKQQTRIETFSDAVFALAITLLVLSSTIPETFEDLWASMRDVIPFAICVALIIVIWYQHYIFFLKYGLQDKVTILLNTILLFVLLVYVYPLKFLARFLSEIYGGIFGIIETDLSRFGEYSHQNLKLLMVNYGLGAFAIFLVFSLMYWRAYKMKSLLDLNSYEIFDTKSSIIANLLMCSVPLLSLIITLIDPWGNFRTTILSGFLYFLYVPIMIVFGRITSKKSRRLLQD</sequence>
<protein>
    <recommendedName>
        <fullName evidence="4">Potassium channel Ftrac_2467</fullName>
    </recommendedName>
    <alternativeName>
        <fullName evidence="3">Transmembrane protein 175</fullName>
        <shortName evidence="3">MtTMEM175</shortName>
    </alternativeName>
</protein>
<comment type="function">
    <text evidence="2">Potassium channel; forms a potassium-permeable leak-like channel with weak selectivity for potassium (PubMed:32267231). The channel is permeable for K(+), Rb(+) and Cs(+) (PubMed:32267231).</text>
</comment>
<comment type="catalytic activity">
    <reaction evidence="2">
        <text>K(+)(in) = K(+)(out)</text>
        <dbReference type="Rhea" id="RHEA:29463"/>
        <dbReference type="ChEBI" id="CHEBI:29103"/>
    </reaction>
</comment>
<comment type="subunit">
    <text evidence="2">Homotetramer.</text>
</comment>
<comment type="subcellular location">
    <subcellularLocation>
        <location evidence="2">Cell membrane</location>
        <topology evidence="2">Multi-pass membrane protein</topology>
    </subcellularLocation>
</comment>
<comment type="domain">
    <text evidence="1 2">The six transmembrane regions are tightly packed within each subunit without undergoing domain swapping (PubMed:32267231). Transmembranes TM1-TM3 are positioned on the inner circle of the channel tetramer and participate in inter-subunit interactions that are central to the assembly of the ion conduction pore (PubMed:32267231). The RxxxFSD motif within transmembrane TM1 coordinates a network of specific inter- and intra-subunit interactions with other conserved residues on TM2 and TM3 and plays a key role in the tetrameric assembly of the channel (PubMed:32267231). Transmembrane TM4-TM6 are positioned on the periphery of the channel and do not contribute to contacts with neighboring subunits (By similarity). Transmembrane TM1 forms the pore-lining inner helix at the center of the channel, creating an hourglass-shaped ion permeation pathway in the channel tetramer (By similarity). Hydrophobic residues (Leu-35, Leu-39 and Leu-42) on the C-terminal half of the TM1 helix form a bottleneck along the ion conduction pathway and serve as the selectivity filter of the channel (PubMed:32267231). Thr-38 is required for potassium ion selectivity (PubMed:32267231).</text>
</comment>
<comment type="similarity">
    <text evidence="4">Belongs to the TMEM175 family.</text>
</comment>
<gene>
    <name evidence="5" type="ordered locus">Ftrac_2467</name>
</gene>
<feature type="chain" id="PRO_0000452678" description="Potassium channel Ftrac_2467">
    <location>
        <begin position="1"/>
        <end position="247"/>
    </location>
</feature>
<feature type="transmembrane region" description="Helical" evidence="2 7 8 9 10 11 12">
    <location>
        <begin position="23"/>
        <end position="44"/>
    </location>
</feature>
<feature type="transmembrane region" description="Helical" evidence="2 7 8 9 10 11 12">
    <location>
        <begin position="56"/>
        <end position="78"/>
    </location>
</feature>
<feature type="transmembrane region" description="Helical" evidence="2 7 8 9 10 11 12">
    <location>
        <begin position="89"/>
        <end position="117"/>
    </location>
</feature>
<feature type="transmembrane region" description="Helical" evidence="2 7 8 9 10 11 12">
    <location>
        <begin position="142"/>
        <end position="165"/>
    </location>
</feature>
<feature type="transmembrane region" description="Helical" evidence="2 7 8 9 10 11 12">
    <location>
        <begin position="187"/>
        <end position="210"/>
    </location>
</feature>
<feature type="transmembrane region" description="Helical" evidence="2 7 8 9 10 11 12">
    <location>
        <begin position="215"/>
        <end position="237"/>
    </location>
</feature>
<feature type="short sequence motif" description="RxxxFSD motif" evidence="1">
    <location>
        <begin position="24"/>
        <end position="30"/>
    </location>
</feature>
<feature type="site" description="Hydrophobic filter residue 1" evidence="2">
    <location>
        <position position="35"/>
    </location>
</feature>
<feature type="site" description="Hydrophobic filter residue 2" evidence="1">
    <location>
        <position position="39"/>
    </location>
</feature>
<feature type="site" description="Hydrophobic filter residue 3" evidence="1">
    <location>
        <position position="42"/>
    </location>
</feature>
<feature type="mutagenesis site" description="Decreased selectivity for potassium ion." evidence="2">
    <original>T</original>
    <variation>A</variation>
    <location>
        <position position="38"/>
    </location>
</feature>
<feature type="helix" evidence="14">
    <location>
        <begin position="18"/>
        <end position="20"/>
    </location>
</feature>
<feature type="helix" evidence="13">
    <location>
        <begin position="24"/>
        <end position="42"/>
    </location>
</feature>
<feature type="helix" evidence="13">
    <location>
        <begin position="50"/>
        <end position="58"/>
    </location>
</feature>
<feature type="helix" evidence="13">
    <location>
        <begin position="60"/>
        <end position="84"/>
    </location>
</feature>
<feature type="helix" evidence="13">
    <location>
        <begin position="89"/>
        <end position="124"/>
    </location>
</feature>
<feature type="helix" evidence="13">
    <location>
        <begin position="132"/>
        <end position="134"/>
    </location>
</feature>
<feature type="helix" evidence="13">
    <location>
        <begin position="139"/>
        <end position="169"/>
    </location>
</feature>
<feature type="turn" evidence="13">
    <location>
        <begin position="170"/>
        <end position="175"/>
    </location>
</feature>
<feature type="helix" evidence="13">
    <location>
        <begin position="178"/>
        <end position="207"/>
    </location>
</feature>
<feature type="strand" evidence="13">
    <location>
        <begin position="209"/>
        <end position="212"/>
    </location>
</feature>
<feature type="helix" evidence="13">
    <location>
        <begin position="214"/>
        <end position="224"/>
    </location>
</feature>
<feature type="helix" evidence="13">
    <location>
        <begin position="226"/>
        <end position="239"/>
    </location>
</feature>
<name>TM175_MARTH</name>
<keyword id="KW-0002">3D-structure</keyword>
<keyword id="KW-1003">Cell membrane</keyword>
<keyword id="KW-0407">Ion channel</keyword>
<keyword id="KW-0406">Ion transport</keyword>
<keyword id="KW-0472">Membrane</keyword>
<keyword id="KW-0630">Potassium</keyword>
<keyword id="KW-0631">Potassium channel</keyword>
<keyword id="KW-0633">Potassium transport</keyword>
<keyword id="KW-1185">Reference proteome</keyword>
<keyword id="KW-0812">Transmembrane</keyword>
<keyword id="KW-1133">Transmembrane helix</keyword>
<keyword id="KW-0813">Transport</keyword>
<accession>E4TN31</accession>
<reference key="1">
    <citation type="journal article" date="2011" name="Stand. Genomic Sci.">
        <title>Complete genome sequence of Marivirga tractuosa type strain (H-43).</title>
        <authorList>
            <person name="Pagani I."/>
            <person name="Chertkov O."/>
            <person name="Lapidus A."/>
            <person name="Lucas S."/>
            <person name="Del Rio T.G."/>
            <person name="Tice H."/>
            <person name="Copeland A."/>
            <person name="Cheng J.F."/>
            <person name="Nolan M."/>
            <person name="Saunders E."/>
            <person name="Pitluck S."/>
            <person name="Held B."/>
            <person name="Goodwin L."/>
            <person name="Liolios K."/>
            <person name="Ovchinikova G."/>
            <person name="Ivanova N."/>
            <person name="Mavromatis K."/>
            <person name="Pati A."/>
            <person name="Chen A."/>
            <person name="Palaniappan K."/>
            <person name="Land M."/>
            <person name="Hauser L."/>
            <person name="Jeffries C.D."/>
            <person name="Detter J.C."/>
            <person name="Han C."/>
            <person name="Tapia R."/>
            <person name="Ngatchou-Djao O.D."/>
            <person name="Rohde M."/>
            <person name="Goker M."/>
            <person name="Spring S."/>
            <person name="Sikorski J."/>
            <person name="Woyke T."/>
            <person name="Bristow J."/>
            <person name="Eisen J.A."/>
            <person name="Markowitz V."/>
            <person name="Hugenholtz P."/>
            <person name="Klenk H.P."/>
            <person name="Kyrpides N.C."/>
        </authorList>
    </citation>
    <scope>NUCLEOTIDE SEQUENCE [LARGE SCALE GENOMIC DNA]</scope>
    <source>
        <strain evidence="6">ATCC 23168 / DSM 4126 / NBRC 15989 / NCIMB 1408 / VKM B-1430 / H-43</strain>
    </source>
</reference>
<reference evidence="7 8 9 10 11 12" key="2">
    <citation type="journal article" date="2020" name="Elife">
        <title>Structural basis for ion selectivity in TMEM175 K+ channels.</title>
        <authorList>
            <person name="Brunner J.D."/>
            <person name="Jakob R.P."/>
            <person name="Schulze T."/>
            <person name="Neldner Y."/>
            <person name="Moroni A."/>
            <person name="Thiel G."/>
            <person name="Maier T."/>
            <person name="Schenck S."/>
        </authorList>
    </citation>
    <scope>X-RAY CRYSTALLOGRAPHY (2.40 ANGSTROMS) OF 2-247</scope>
    <scope>FUNCTION</scope>
    <scope>TRANSPORTER ACTIVITY</scope>
    <scope>SUBUNIT</scope>
    <scope>SUBCELLULAR LOCATION</scope>
    <scope>DOMAIN</scope>
    <scope>MUTAGENESIS OF THR-38</scope>
</reference>
<evidence type="ECO:0000250" key="1">
    <source>
        <dbReference type="UniProtKB" id="K9UJK2"/>
    </source>
</evidence>
<evidence type="ECO:0000269" key="2">
    <source>
    </source>
</evidence>
<evidence type="ECO:0000303" key="3">
    <source>
    </source>
</evidence>
<evidence type="ECO:0000305" key="4"/>
<evidence type="ECO:0000312" key="5">
    <source>
        <dbReference type="EMBL" id="ADR22445.1"/>
    </source>
</evidence>
<evidence type="ECO:0000312" key="6">
    <source>
        <dbReference type="Proteomes" id="UP000008720"/>
    </source>
</evidence>
<evidence type="ECO:0007744" key="7">
    <source>
        <dbReference type="PDB" id="6HD8"/>
    </source>
</evidence>
<evidence type="ECO:0007744" key="8">
    <source>
        <dbReference type="PDB" id="6HD9"/>
    </source>
</evidence>
<evidence type="ECO:0007744" key="9">
    <source>
        <dbReference type="PDB" id="6HDA"/>
    </source>
</evidence>
<evidence type="ECO:0007744" key="10">
    <source>
        <dbReference type="PDB" id="6HDB"/>
    </source>
</evidence>
<evidence type="ECO:0007744" key="11">
    <source>
        <dbReference type="PDB" id="6HDC"/>
    </source>
</evidence>
<evidence type="ECO:0007744" key="12">
    <source>
        <dbReference type="PDB" id="6SWR"/>
    </source>
</evidence>
<evidence type="ECO:0007829" key="13">
    <source>
        <dbReference type="PDB" id="6HD8"/>
    </source>
</evidence>
<evidence type="ECO:0007829" key="14">
    <source>
        <dbReference type="PDB" id="6HDB"/>
    </source>
</evidence>
<dbReference type="EMBL" id="CP002349">
    <property type="protein sequence ID" value="ADR22445.1"/>
    <property type="molecule type" value="Genomic_DNA"/>
</dbReference>
<dbReference type="RefSeq" id="WP_013454588.1">
    <property type="nucleotide sequence ID" value="NC_014759.1"/>
</dbReference>
<dbReference type="PDB" id="6HD8">
    <property type="method" value="X-ray"/>
    <property type="resolution" value="2.40 A"/>
    <property type="chains" value="B=2-247"/>
</dbReference>
<dbReference type="PDB" id="6HD9">
    <property type="method" value="X-ray"/>
    <property type="resolution" value="3.50 A"/>
    <property type="chains" value="B=2-247"/>
</dbReference>
<dbReference type="PDB" id="6HDA">
    <property type="method" value="X-ray"/>
    <property type="resolution" value="3.80 A"/>
    <property type="chains" value="B=2-247"/>
</dbReference>
<dbReference type="PDB" id="6HDB">
    <property type="method" value="X-ray"/>
    <property type="resolution" value="2.90 A"/>
    <property type="chains" value="B=2-247"/>
</dbReference>
<dbReference type="PDB" id="6HDC">
    <property type="method" value="X-ray"/>
    <property type="resolution" value="3.40 A"/>
    <property type="chains" value="B=2-247"/>
</dbReference>
<dbReference type="PDB" id="6SWR">
    <property type="method" value="X-ray"/>
    <property type="resolution" value="3.20 A"/>
    <property type="chains" value="B/E=2-247"/>
</dbReference>
<dbReference type="PDBsum" id="6HD8"/>
<dbReference type="PDBsum" id="6HD9"/>
<dbReference type="PDBsum" id="6HDA"/>
<dbReference type="PDBsum" id="6HDB"/>
<dbReference type="PDBsum" id="6HDC"/>
<dbReference type="PDBsum" id="6SWR"/>
<dbReference type="SMR" id="E4TN31"/>
<dbReference type="STRING" id="643867.Ftrac_2467"/>
<dbReference type="KEGG" id="mtt:Ftrac_2467"/>
<dbReference type="eggNOG" id="COG3548">
    <property type="taxonomic scope" value="Bacteria"/>
</dbReference>
<dbReference type="HOGENOM" id="CLU_093496_0_0_10"/>
<dbReference type="OrthoDB" id="7626281at2"/>
<dbReference type="Proteomes" id="UP000008720">
    <property type="component" value="Chromosome"/>
</dbReference>
<dbReference type="GO" id="GO:0005886">
    <property type="term" value="C:plasma membrane"/>
    <property type="evidence" value="ECO:0000314"/>
    <property type="project" value="UniProtKB"/>
</dbReference>
<dbReference type="GO" id="GO:0022841">
    <property type="term" value="F:potassium ion leak channel activity"/>
    <property type="evidence" value="ECO:0000314"/>
    <property type="project" value="UniProtKB"/>
</dbReference>
<dbReference type="GO" id="GO:0015252">
    <property type="term" value="F:proton channel activity"/>
    <property type="evidence" value="ECO:0007669"/>
    <property type="project" value="InterPro"/>
</dbReference>
<dbReference type="GO" id="GO:0071805">
    <property type="term" value="P:potassium ion transmembrane transport"/>
    <property type="evidence" value="ECO:0000314"/>
    <property type="project" value="UniProtKB"/>
</dbReference>
<dbReference type="GO" id="GO:0051289">
    <property type="term" value="P:protein homotetramerization"/>
    <property type="evidence" value="ECO:0000314"/>
    <property type="project" value="UniProtKB"/>
</dbReference>
<dbReference type="InterPro" id="IPR010617">
    <property type="entry name" value="TMEM175-like"/>
</dbReference>
<dbReference type="Pfam" id="PF06736">
    <property type="entry name" value="TMEM175"/>
    <property type="match status" value="1"/>
</dbReference>
<organism>
    <name type="scientific">Marivirga tractuosa (strain ATCC 23168 / DSM 4126 / NBRC 15989 / NCIMB 1408 / VKM B-1430 / H-43)</name>
    <name type="common">Microscilla tractuosa</name>
    <name type="synonym">Flexibacter tractuosus</name>
    <dbReference type="NCBI Taxonomy" id="643867"/>
    <lineage>
        <taxon>Bacteria</taxon>
        <taxon>Pseudomonadati</taxon>
        <taxon>Bacteroidota</taxon>
        <taxon>Cytophagia</taxon>
        <taxon>Cytophagales</taxon>
        <taxon>Marivirgaceae</taxon>
        <taxon>Marivirga</taxon>
    </lineage>
</organism>
<proteinExistence type="evidence at protein level"/>